<name>ALAA_ECOL6</name>
<accession>P0A960</accession>
<accession>P77727</accession>
<reference key="1">
    <citation type="journal article" date="2002" name="Proc. Natl. Acad. Sci. U.S.A.">
        <title>Extensive mosaic structure revealed by the complete genome sequence of uropathogenic Escherichia coli.</title>
        <authorList>
            <person name="Welch R.A."/>
            <person name="Burland V."/>
            <person name="Plunkett G. III"/>
            <person name="Redford P."/>
            <person name="Roesch P."/>
            <person name="Rasko D."/>
            <person name="Buckles E.L."/>
            <person name="Liou S.-R."/>
            <person name="Boutin A."/>
            <person name="Hackett J."/>
            <person name="Stroud D."/>
            <person name="Mayhew G.F."/>
            <person name="Rose D.J."/>
            <person name="Zhou S."/>
            <person name="Schwartz D.C."/>
            <person name="Perna N.T."/>
            <person name="Mobley H.L.T."/>
            <person name="Donnenberg M.S."/>
            <person name="Blattner F.R."/>
        </authorList>
    </citation>
    <scope>NUCLEOTIDE SEQUENCE [LARGE SCALE GENOMIC DNA]</scope>
    <source>
        <strain>CFT073 / ATCC 700928 / UPEC</strain>
    </source>
</reference>
<protein>
    <recommendedName>
        <fullName>Glutamate-pyruvate aminotransferase AlaA</fullName>
        <ecNumber evidence="2">2.6.1.2</ecNumber>
    </recommendedName>
</protein>
<sequence length="405" mass="45517">MSPIEKSSKLENVCYDIRGPVLKEAKRLEEEGNKVLKLNIGNPAPFGFDAPDEILVDVIRNLPTAQGYCDSKGLYSARKAIMQHYQARGMRDVTVEDIYIGNGVSELIVQAMQALLNSGDEMLVPAPDYPLWTAAVSLSSGKAVHYLCDESSDWFPDLDDIRAKITPRTRGIVIINPNNPTGAVYSKELLMEIVEIARQHNLIIFADEIYDKILYDDAEHHSIAPLAPDLLTITFNGLSKTYRVAGFRQGWMVLNGPKKHAKGYIEGLEMLASMRLCANVPAQHAIQTALGGYQSISEFITPGGRLYEQRNRAWELINDIPGVSCVKPRGALYMFPKIDAKRFNIHDDQKMVLDFLLQEKVLLVQGTAFNWPWPDHFRIVTLPRVDDIELSLSKFARFLSGYHQL</sequence>
<proteinExistence type="inferred from homology"/>
<feature type="chain" id="PRO_0000123867" description="Glutamate-pyruvate aminotransferase AlaA">
    <location>
        <begin position="1"/>
        <end position="405"/>
    </location>
</feature>
<feature type="binding site" evidence="2">
    <location>
        <position position="41"/>
    </location>
    <ligand>
        <name>L-alanine</name>
        <dbReference type="ChEBI" id="CHEBI:57972"/>
    </ligand>
</feature>
<feature type="binding site" evidence="2">
    <location>
        <position position="179"/>
    </location>
    <ligand>
        <name>L-alanine</name>
        <dbReference type="ChEBI" id="CHEBI:57972"/>
    </ligand>
</feature>
<feature type="binding site" evidence="2">
    <location>
        <position position="378"/>
    </location>
    <ligand>
        <name>L-alanine</name>
        <dbReference type="ChEBI" id="CHEBI:57972"/>
    </ligand>
</feature>
<feature type="modified residue" description="N6-(pyridoxal phosphate)lysine" evidence="2">
    <location>
        <position position="240"/>
    </location>
</feature>
<gene>
    <name type="primary">alaA</name>
    <name type="synonym">yfbQ</name>
    <name type="ordered locus">c2831</name>
</gene>
<evidence type="ECO:0000250" key="1"/>
<evidence type="ECO:0000250" key="2">
    <source>
        <dbReference type="UniProtKB" id="P0A959"/>
    </source>
</evidence>
<evidence type="ECO:0000305" key="3"/>
<comment type="function">
    <text evidence="2">Involved in the biosynthesis of alanine. Catalyzes the transamination of pyruvate by glutamate, leading to the formation of L-alanine and 2-oxoglutarate. Is also able to catalyze the reverse reaction.</text>
</comment>
<comment type="catalytic activity">
    <reaction evidence="2">
        <text>L-alanine + 2-oxoglutarate = pyruvate + L-glutamate</text>
        <dbReference type="Rhea" id="RHEA:19453"/>
        <dbReference type="ChEBI" id="CHEBI:15361"/>
        <dbReference type="ChEBI" id="CHEBI:16810"/>
        <dbReference type="ChEBI" id="CHEBI:29985"/>
        <dbReference type="ChEBI" id="CHEBI:57972"/>
        <dbReference type="EC" id="2.6.1.2"/>
    </reaction>
    <physiologicalReaction direction="right-to-left" evidence="2">
        <dbReference type="Rhea" id="RHEA:19455"/>
    </physiologicalReaction>
</comment>
<comment type="cofactor">
    <cofactor evidence="2">
        <name>pyridoxal 5'-phosphate</name>
        <dbReference type="ChEBI" id="CHEBI:597326"/>
    </cofactor>
</comment>
<comment type="pathway">
    <text evidence="2">Amino-acid biosynthesis; L-alanine biosynthesis.</text>
</comment>
<comment type="subunit">
    <text evidence="2">Homodimer.</text>
</comment>
<comment type="subcellular location">
    <subcellularLocation>
        <location evidence="1">Cytoplasm</location>
    </subcellularLocation>
</comment>
<comment type="similarity">
    <text evidence="3">Belongs to the class-I pyridoxal-phosphate-dependent aminotransferase family.</text>
</comment>
<keyword id="KW-0028">Amino-acid biosynthesis</keyword>
<keyword id="KW-0032">Aminotransferase</keyword>
<keyword id="KW-0963">Cytoplasm</keyword>
<keyword id="KW-0663">Pyridoxal phosphate</keyword>
<keyword id="KW-1185">Reference proteome</keyword>
<keyword id="KW-0808">Transferase</keyword>
<organism>
    <name type="scientific">Escherichia coli O6:H1 (strain CFT073 / ATCC 700928 / UPEC)</name>
    <dbReference type="NCBI Taxonomy" id="199310"/>
    <lineage>
        <taxon>Bacteria</taxon>
        <taxon>Pseudomonadati</taxon>
        <taxon>Pseudomonadota</taxon>
        <taxon>Gammaproteobacteria</taxon>
        <taxon>Enterobacterales</taxon>
        <taxon>Enterobacteriaceae</taxon>
        <taxon>Escherichia</taxon>
    </lineage>
</organism>
<dbReference type="EC" id="2.6.1.2" evidence="2"/>
<dbReference type="EMBL" id="AE014075">
    <property type="protein sequence ID" value="AAN81285.1"/>
    <property type="molecule type" value="Genomic_DNA"/>
</dbReference>
<dbReference type="RefSeq" id="WP_000074527.1">
    <property type="nucleotide sequence ID" value="NZ_CP051263.1"/>
</dbReference>
<dbReference type="SMR" id="P0A960"/>
<dbReference type="STRING" id="199310.c2831"/>
<dbReference type="GeneID" id="93774884"/>
<dbReference type="KEGG" id="ecc:c2831"/>
<dbReference type="eggNOG" id="COG0436">
    <property type="taxonomic scope" value="Bacteria"/>
</dbReference>
<dbReference type="HOGENOM" id="CLU_017584_4_2_6"/>
<dbReference type="BioCyc" id="ECOL199310:C2831-MONOMER"/>
<dbReference type="UniPathway" id="UPA00133"/>
<dbReference type="Proteomes" id="UP000001410">
    <property type="component" value="Chromosome"/>
</dbReference>
<dbReference type="GO" id="GO:0005737">
    <property type="term" value="C:cytoplasm"/>
    <property type="evidence" value="ECO:0007669"/>
    <property type="project" value="UniProtKB-SubCell"/>
</dbReference>
<dbReference type="GO" id="GO:0004021">
    <property type="term" value="F:L-alanine:2-oxoglutarate aminotransferase activity"/>
    <property type="evidence" value="ECO:0007669"/>
    <property type="project" value="UniProtKB-EC"/>
</dbReference>
<dbReference type="GO" id="GO:0030170">
    <property type="term" value="F:pyridoxal phosphate binding"/>
    <property type="evidence" value="ECO:0007669"/>
    <property type="project" value="InterPro"/>
</dbReference>
<dbReference type="GO" id="GO:0030632">
    <property type="term" value="P:D-alanine biosynthetic process"/>
    <property type="evidence" value="ECO:0000250"/>
    <property type="project" value="UniProtKB"/>
</dbReference>
<dbReference type="CDD" id="cd00609">
    <property type="entry name" value="AAT_like"/>
    <property type="match status" value="1"/>
</dbReference>
<dbReference type="FunFam" id="3.40.640.10:FF:000019">
    <property type="entry name" value="Pyridoxal phosphate-dependent aminotransferase"/>
    <property type="match status" value="1"/>
</dbReference>
<dbReference type="Gene3D" id="3.90.1150.10">
    <property type="entry name" value="Aspartate Aminotransferase, domain 1"/>
    <property type="match status" value="1"/>
</dbReference>
<dbReference type="Gene3D" id="3.40.640.10">
    <property type="entry name" value="Type I PLP-dependent aspartate aminotransferase-like (Major domain)"/>
    <property type="match status" value="1"/>
</dbReference>
<dbReference type="InterPro" id="IPR051926">
    <property type="entry name" value="Ala_Aminotransferase"/>
</dbReference>
<dbReference type="InterPro" id="IPR004839">
    <property type="entry name" value="Aminotransferase_I/II_large"/>
</dbReference>
<dbReference type="InterPro" id="IPR015424">
    <property type="entry name" value="PyrdxlP-dep_Trfase"/>
</dbReference>
<dbReference type="InterPro" id="IPR015421">
    <property type="entry name" value="PyrdxlP-dep_Trfase_major"/>
</dbReference>
<dbReference type="InterPro" id="IPR015422">
    <property type="entry name" value="PyrdxlP-dep_Trfase_small"/>
</dbReference>
<dbReference type="PANTHER" id="PTHR43488">
    <property type="entry name" value="GLUTAMATE-PYRUVATE AMINOTRANSFERASE ALAA"/>
    <property type="match status" value="1"/>
</dbReference>
<dbReference type="PANTHER" id="PTHR43488:SF2">
    <property type="entry name" value="GLUTAMATE-PYRUVATE AMINOTRANSFERASE ALAA"/>
    <property type="match status" value="1"/>
</dbReference>
<dbReference type="Pfam" id="PF00155">
    <property type="entry name" value="Aminotran_1_2"/>
    <property type="match status" value="1"/>
</dbReference>
<dbReference type="SUPFAM" id="SSF53383">
    <property type="entry name" value="PLP-dependent transferases"/>
    <property type="match status" value="1"/>
</dbReference>